<dbReference type="GO" id="GO:0005509">
    <property type="term" value="F:calcium ion binding"/>
    <property type="evidence" value="ECO:0000314"/>
    <property type="project" value="UniProtKB"/>
</dbReference>
<dbReference type="GO" id="GO:0031215">
    <property type="term" value="P:shell calcification"/>
    <property type="evidence" value="ECO:0000314"/>
    <property type="project" value="UniProtKB"/>
</dbReference>
<evidence type="ECO:0000269" key="1">
    <source>
    </source>
</evidence>
<evidence type="ECO:0000269" key="2">
    <source>
    </source>
</evidence>
<evidence type="ECO:0000305" key="3"/>
<organism>
    <name type="scientific">Unio pictorum</name>
    <name type="common">Painter's mussel</name>
    <dbReference type="NCBI Taxonomy" id="55837"/>
    <lineage>
        <taxon>Eukaryota</taxon>
        <taxon>Metazoa</taxon>
        <taxon>Spiralia</taxon>
        <taxon>Lophotrochozoa</taxon>
        <taxon>Mollusca</taxon>
        <taxon>Bivalvia</taxon>
        <taxon>Autobranchia</taxon>
        <taxon>Heteroconchia</taxon>
        <taxon>Palaeoheterodonta</taxon>
        <taxon>Unionida</taxon>
        <taxon>Unionoidea</taxon>
        <taxon>Unionidae</taxon>
        <taxon>Unioninae</taxon>
        <taxon>Unio</taxon>
    </lineage>
</organism>
<comment type="function">
    <text evidence="1 2">Calcium-binding.</text>
</comment>
<comment type="tissue specificity">
    <text evidence="1 2">Nacreous and prismatic layers of the shell.</text>
</comment>
<comment type="PTM">
    <text evidence="1 2">Glycosylated.</text>
</comment>
<comment type="miscellaneous">
    <text>On the 2D-gel the determined pI of this protein is: 7, its MW is: 29 kDa.</text>
</comment>
<accession>P85510</accession>
<proteinExistence type="evidence at protein level"/>
<protein>
    <recommendedName>
        <fullName>Calcium-binding shell glycoprotein P29</fullName>
    </recommendedName>
</protein>
<feature type="chain" id="PRO_0000353203" description="Calcium-binding shell glycoprotein P29">
    <location>
        <begin position="1" status="less than"/>
        <end position="12" status="greater than"/>
    </location>
</feature>
<feature type="unsure residue" description="L or I">
    <location>
        <position position="4"/>
    </location>
</feature>
<feature type="non-terminal residue">
    <location>
        <position position="1"/>
    </location>
</feature>
<feature type="non-terminal residue">
    <location>
        <position position="12"/>
    </location>
</feature>
<keyword id="KW-0106">Calcium</keyword>
<keyword id="KW-0903">Direct protein sequencing</keyword>
<keyword id="KW-0325">Glycoprotein</keyword>
<sequence>KDALEHTGFAPK</sequence>
<reference key="1">
    <citation type="journal article" date="2008" name="ChemBioChem">
        <title>Nacre calcification in the freshwater mussel Unio pictorum: carbonic anhydrase activity and purification of a 95 kDa calcium-binding glycoprotein.</title>
        <authorList>
            <person name="Marie B."/>
            <person name="Luquet G."/>
            <person name="Bedouet L."/>
            <person name="Milet C."/>
            <person name="Guichard N."/>
            <person name="Medakovic D."/>
            <person name="Marin F."/>
        </authorList>
    </citation>
    <scope>PROTEIN SEQUENCE</scope>
    <scope>FUNCTION</scope>
    <scope>TISSUE SPECIFICITY</scope>
    <scope>GLYCOSYLATION</scope>
    <source>
        <tissue>Shell</tissue>
    </source>
</reference>
<reference evidence="3" key="2">
    <citation type="journal article" date="2007" name="FEBS J.">
        <title>The shell matrix of the freshwater mussel Unio pictorum (Paleoheterodonta, Unionoida). Involvement of acidic polysaccharides from glycoproteins in nacre mineralization.</title>
        <authorList>
            <person name="Marie B."/>
            <person name="Luquet G."/>
            <person name="Pais De Barros J.-P."/>
            <person name="Guichard N."/>
            <person name="Morel S."/>
            <person name="Alcaraz G."/>
            <person name="Bollache L."/>
            <person name="Marin F."/>
        </authorList>
    </citation>
    <scope>IDENTIFICATION</scope>
    <scope>FUNCTION</scope>
    <scope>TISSUE SPECIFICITY</scope>
    <scope>GLYCOSYLATION</scope>
</reference>
<name>CBG29_UNIPI</name>